<evidence type="ECO:0000269" key="1">
    <source ref="1"/>
</evidence>
<evidence type="ECO:0000305" key="2"/>
<comment type="function">
    <text evidence="1 2">Has antimicrobial activity.</text>
</comment>
<comment type="subcellular location">
    <subcellularLocation>
        <location evidence="1 2">Secreted</location>
    </subcellularLocation>
</comment>
<comment type="tissue specificity">
    <text evidence="1">Expressed by the skin glands.</text>
</comment>
<comment type="similarity">
    <text evidence="2">Belongs to the bombinin family.</text>
</comment>
<sequence>ILGPVLSLVGNALGGLLKNE</sequence>
<organism evidence="2">
    <name type="scientific">Bombina maxima</name>
    <name type="common">Giant fire-bellied toad</name>
    <name type="synonym">Chinese red belly toad</name>
    <dbReference type="NCBI Taxonomy" id="161274"/>
    <lineage>
        <taxon>Eukaryota</taxon>
        <taxon>Metazoa</taxon>
        <taxon>Chordata</taxon>
        <taxon>Craniata</taxon>
        <taxon>Vertebrata</taxon>
        <taxon>Euteleostomi</taxon>
        <taxon>Amphibia</taxon>
        <taxon>Batrachia</taxon>
        <taxon>Anura</taxon>
        <taxon>Bombinatoridae</taxon>
        <taxon>Bombina</taxon>
    </lineage>
</organism>
<accession>P83087</accession>
<reference evidence="2" key="1">
    <citation type="submission" date="2001-06" db="UniProtKB">
        <title>Isolation and structural characterisation of antimicrobial peptides from the venom of the Chinese large-webbed bell toad (Bombina maxima).</title>
        <authorList>
            <person name="Chen T.B."/>
            <person name="McClean S."/>
            <person name="Orr D.F."/>
            <person name="Bjourson A.J."/>
            <person name="Rao P.F."/>
            <person name="Shaw C."/>
        </authorList>
    </citation>
    <scope>PROTEIN SEQUENCE</scope>
    <scope>FUNCTION</scope>
    <scope>SUBCELLULAR LOCATION</scope>
    <scope>TISSUE SPECIFICITY</scope>
    <source>
        <tissue>Skin secretion</tissue>
    </source>
</reference>
<dbReference type="GO" id="GO:0005576">
    <property type="term" value="C:extracellular region"/>
    <property type="evidence" value="ECO:0007669"/>
    <property type="project" value="UniProtKB-SubCell"/>
</dbReference>
<dbReference type="GO" id="GO:0042742">
    <property type="term" value="P:defense response to bacterium"/>
    <property type="evidence" value="ECO:0007669"/>
    <property type="project" value="UniProtKB-KW"/>
</dbReference>
<dbReference type="InterPro" id="IPR007962">
    <property type="entry name" value="Bombinin"/>
</dbReference>
<dbReference type="Pfam" id="PF05298">
    <property type="entry name" value="Bombinin"/>
    <property type="match status" value="1"/>
</dbReference>
<name>MHU_BOMMX</name>
<protein>
    <recommendedName>
        <fullName>Maximin-Hu</fullName>
    </recommendedName>
    <alternativeName>
        <fullName>Maximin-8</fullName>
    </alternativeName>
</protein>
<keyword id="KW-0878">Amphibian defense peptide</keyword>
<keyword id="KW-0044">Antibiotic</keyword>
<keyword id="KW-0929">Antimicrobial</keyword>
<keyword id="KW-0903">Direct protein sequencing</keyword>
<keyword id="KW-0964">Secreted</keyword>
<proteinExistence type="evidence at protein level"/>
<feature type="peptide" id="PRO_0000043504" description="Maximin-Hu">
    <location>
        <begin position="1"/>
        <end position="20"/>
    </location>
</feature>